<feature type="chain" id="PRO_1000136688" description="Putative nickel insertion protein">
    <location>
        <begin position="1"/>
        <end position="386"/>
    </location>
</feature>
<accession>B5YFE5</accession>
<organism>
    <name type="scientific">Dictyoglomus thermophilum (strain ATCC 35947 / DSM 3960 / H-6-12)</name>
    <dbReference type="NCBI Taxonomy" id="309799"/>
    <lineage>
        <taxon>Bacteria</taxon>
        <taxon>Pseudomonadati</taxon>
        <taxon>Dictyoglomota</taxon>
        <taxon>Dictyoglomia</taxon>
        <taxon>Dictyoglomales</taxon>
        <taxon>Dictyoglomaceae</taxon>
        <taxon>Dictyoglomus</taxon>
    </lineage>
</organism>
<keyword id="KW-0533">Nickel</keyword>
<name>Y1434_DICT6</name>
<dbReference type="EMBL" id="CP001146">
    <property type="protein sequence ID" value="ACI19512.1"/>
    <property type="molecule type" value="Genomic_DNA"/>
</dbReference>
<dbReference type="RefSeq" id="WP_012548144.1">
    <property type="nucleotide sequence ID" value="NC_011297.1"/>
</dbReference>
<dbReference type="SMR" id="B5YFE5"/>
<dbReference type="STRING" id="309799.DICTH_1434"/>
<dbReference type="PaxDb" id="309799-DICTH_1434"/>
<dbReference type="KEGG" id="dth:DICTH_1434"/>
<dbReference type="eggNOG" id="COG1641">
    <property type="taxonomic scope" value="Bacteria"/>
</dbReference>
<dbReference type="HOGENOM" id="CLU_028523_2_1_0"/>
<dbReference type="OrthoDB" id="9765625at2"/>
<dbReference type="Proteomes" id="UP000001733">
    <property type="component" value="Chromosome"/>
</dbReference>
<dbReference type="GO" id="GO:0016829">
    <property type="term" value="F:lyase activity"/>
    <property type="evidence" value="ECO:0007669"/>
    <property type="project" value="UniProtKB-UniRule"/>
</dbReference>
<dbReference type="GO" id="GO:0016151">
    <property type="term" value="F:nickel cation binding"/>
    <property type="evidence" value="ECO:0007669"/>
    <property type="project" value="UniProtKB-UniRule"/>
</dbReference>
<dbReference type="Gene3D" id="3.10.20.300">
    <property type="entry name" value="mk0293 like domain"/>
    <property type="match status" value="1"/>
</dbReference>
<dbReference type="Gene3D" id="3.30.70.1380">
    <property type="entry name" value="Transcriptional regulatory protein pf0864 domain like"/>
    <property type="match status" value="1"/>
</dbReference>
<dbReference type="HAMAP" id="MF_01074">
    <property type="entry name" value="LarC"/>
    <property type="match status" value="1"/>
</dbReference>
<dbReference type="InterPro" id="IPR002822">
    <property type="entry name" value="Ni_insertion"/>
</dbReference>
<dbReference type="NCBIfam" id="TIGR00299">
    <property type="entry name" value="nickel pincer cofactor biosynthesis protein LarC"/>
    <property type="match status" value="1"/>
</dbReference>
<dbReference type="PANTHER" id="PTHR36566">
    <property type="entry name" value="NICKEL INSERTION PROTEIN-RELATED"/>
    <property type="match status" value="1"/>
</dbReference>
<dbReference type="PANTHER" id="PTHR36566:SF1">
    <property type="entry name" value="PYRIDINIUM-3,5-BISTHIOCARBOXYLIC ACID MONONUCLEOTIDE NICKEL INSERTION PROTEIN"/>
    <property type="match status" value="1"/>
</dbReference>
<dbReference type="Pfam" id="PF01969">
    <property type="entry name" value="Ni_insertion"/>
    <property type="match status" value="1"/>
</dbReference>
<comment type="similarity">
    <text evidence="1">Belongs to the LarC family.</text>
</comment>
<gene>
    <name type="ordered locus">DICTH_1434</name>
</gene>
<evidence type="ECO:0000255" key="1">
    <source>
        <dbReference type="HAMAP-Rule" id="MF_01074"/>
    </source>
</evidence>
<reference key="1">
    <citation type="journal article" date="2014" name="Genome Announc.">
        <title>Complete Genome Sequence of the Extreme Thermophile Dictyoglomus thermophilum H-6-12.</title>
        <authorList>
            <person name="Coil D.A."/>
            <person name="Badger J.H."/>
            <person name="Forberger H.C."/>
            <person name="Riggs F."/>
            <person name="Madupu R."/>
            <person name="Fedorova N."/>
            <person name="Ward N."/>
            <person name="Robb F.T."/>
            <person name="Eisen J.A."/>
        </authorList>
    </citation>
    <scope>NUCLEOTIDE SEQUENCE [LARGE SCALE GENOMIC DNA]</scope>
    <source>
        <strain>ATCC 35947 / DSM 3960 / H-6-12</strain>
    </source>
</reference>
<sequence>MKALYFDCFSGISGDMILGALIDLGIDVEKWKTELNKIPVKGYKIEISKKQKNSIWGTDVNIIIDDHHSHRHLEDLLKIVDESGLSENIKTKAKNIFYKIAEAEAKIHNQPIDEVHFHEIGALDTIIDVLGSLILLEMLEVEEIYSSPLPLGSGFVNTAHGTIPVPAPATLEILRGIPVYKDGREGELVTPTGAAIISTVANFVQELPPIRVDKIGYGCGKKDFSFPNLLRVYVGELVESTVKERNIVLETNIDDMNPQIFGYLVEKLFKEGALDVFLTPVYMKKGRPGILLSVIAPLVMEERLSEVIFRETTTLGIRKIYVDKKIMPREIKEIETKWGKVRIKVANINGIRKAYPEYEDCKSIAERENIPLKDVILEIEKLMERE</sequence>
<proteinExistence type="inferred from homology"/>
<protein>
    <recommendedName>
        <fullName evidence="1">Putative nickel insertion protein</fullName>
    </recommendedName>
</protein>